<name>ADSL4_ARATH</name>
<reference key="1">
    <citation type="journal article" date="2000" name="Nature">
        <title>Sequence and analysis of chromosome 1 of the plant Arabidopsis thaliana.</title>
        <authorList>
            <person name="Theologis A."/>
            <person name="Ecker J.R."/>
            <person name="Palm C.J."/>
            <person name="Federspiel N.A."/>
            <person name="Kaul S."/>
            <person name="White O."/>
            <person name="Alonso J."/>
            <person name="Altafi H."/>
            <person name="Araujo R."/>
            <person name="Bowman C.L."/>
            <person name="Brooks S.Y."/>
            <person name="Buehler E."/>
            <person name="Chan A."/>
            <person name="Chao Q."/>
            <person name="Chen H."/>
            <person name="Cheuk R.F."/>
            <person name="Chin C.W."/>
            <person name="Chung M.K."/>
            <person name="Conn L."/>
            <person name="Conway A.B."/>
            <person name="Conway A.R."/>
            <person name="Creasy T.H."/>
            <person name="Dewar K."/>
            <person name="Dunn P."/>
            <person name="Etgu P."/>
            <person name="Feldblyum T.V."/>
            <person name="Feng J.-D."/>
            <person name="Fong B."/>
            <person name="Fujii C.Y."/>
            <person name="Gill J.E."/>
            <person name="Goldsmith A.D."/>
            <person name="Haas B."/>
            <person name="Hansen N.F."/>
            <person name="Hughes B."/>
            <person name="Huizar L."/>
            <person name="Hunter J.L."/>
            <person name="Jenkins J."/>
            <person name="Johnson-Hopson C."/>
            <person name="Khan S."/>
            <person name="Khaykin E."/>
            <person name="Kim C.J."/>
            <person name="Koo H.L."/>
            <person name="Kremenetskaia I."/>
            <person name="Kurtz D.B."/>
            <person name="Kwan A."/>
            <person name="Lam B."/>
            <person name="Langin-Hooper S."/>
            <person name="Lee A."/>
            <person name="Lee J.M."/>
            <person name="Lenz C.A."/>
            <person name="Li J.H."/>
            <person name="Li Y.-P."/>
            <person name="Lin X."/>
            <person name="Liu S.X."/>
            <person name="Liu Z.A."/>
            <person name="Luros J.S."/>
            <person name="Maiti R."/>
            <person name="Marziali A."/>
            <person name="Militscher J."/>
            <person name="Miranda M."/>
            <person name="Nguyen M."/>
            <person name="Nierman W.C."/>
            <person name="Osborne B.I."/>
            <person name="Pai G."/>
            <person name="Peterson J."/>
            <person name="Pham P.K."/>
            <person name="Rizzo M."/>
            <person name="Rooney T."/>
            <person name="Rowley D."/>
            <person name="Sakano H."/>
            <person name="Salzberg S.L."/>
            <person name="Schwartz J.R."/>
            <person name="Shinn P."/>
            <person name="Southwick A.M."/>
            <person name="Sun H."/>
            <person name="Tallon L.J."/>
            <person name="Tambunga G."/>
            <person name="Toriumi M.J."/>
            <person name="Town C.D."/>
            <person name="Utterback T."/>
            <person name="Van Aken S."/>
            <person name="Vaysberg M."/>
            <person name="Vysotskaia V.S."/>
            <person name="Walker M."/>
            <person name="Wu D."/>
            <person name="Yu G."/>
            <person name="Fraser C.M."/>
            <person name="Venter J.C."/>
            <person name="Davis R.W."/>
        </authorList>
    </citation>
    <scope>NUCLEOTIDE SEQUENCE [LARGE SCALE GENOMIC DNA]</scope>
    <source>
        <strain>cv. Columbia</strain>
    </source>
</reference>
<reference key="2">
    <citation type="journal article" date="2017" name="Plant J.">
        <title>Araport11: a complete reannotation of the Arabidopsis thaliana reference genome.</title>
        <authorList>
            <person name="Cheng C.Y."/>
            <person name="Krishnakumar V."/>
            <person name="Chan A.P."/>
            <person name="Thibaud-Nissen F."/>
            <person name="Schobel S."/>
            <person name="Town C.D."/>
        </authorList>
    </citation>
    <scope>GENOME REANNOTATION</scope>
    <source>
        <strain>cv. Columbia</strain>
    </source>
</reference>
<reference key="3">
    <citation type="journal article" date="2003" name="Science">
        <title>Empirical analysis of transcriptional activity in the Arabidopsis genome.</title>
        <authorList>
            <person name="Yamada K."/>
            <person name="Lim J."/>
            <person name="Dale J.M."/>
            <person name="Chen H."/>
            <person name="Shinn P."/>
            <person name="Palm C.J."/>
            <person name="Southwick A.M."/>
            <person name="Wu H.C."/>
            <person name="Kim C.J."/>
            <person name="Nguyen M."/>
            <person name="Pham P.K."/>
            <person name="Cheuk R.F."/>
            <person name="Karlin-Newmann G."/>
            <person name="Liu S.X."/>
            <person name="Lam B."/>
            <person name="Sakano H."/>
            <person name="Wu T."/>
            <person name="Yu G."/>
            <person name="Miranda M."/>
            <person name="Quach H.L."/>
            <person name="Tripp M."/>
            <person name="Chang C.H."/>
            <person name="Lee J.M."/>
            <person name="Toriumi M.J."/>
            <person name="Chan M.M."/>
            <person name="Tang C.C."/>
            <person name="Onodera C.S."/>
            <person name="Deng J.M."/>
            <person name="Akiyama K."/>
            <person name="Ansari Y."/>
            <person name="Arakawa T."/>
            <person name="Banh J."/>
            <person name="Banno F."/>
            <person name="Bowser L."/>
            <person name="Brooks S.Y."/>
            <person name="Carninci P."/>
            <person name="Chao Q."/>
            <person name="Choy N."/>
            <person name="Enju A."/>
            <person name="Goldsmith A.D."/>
            <person name="Gurjal M."/>
            <person name="Hansen N.F."/>
            <person name="Hayashizaki Y."/>
            <person name="Johnson-Hopson C."/>
            <person name="Hsuan V.W."/>
            <person name="Iida K."/>
            <person name="Karnes M."/>
            <person name="Khan S."/>
            <person name="Koesema E."/>
            <person name="Ishida J."/>
            <person name="Jiang P.X."/>
            <person name="Jones T."/>
            <person name="Kawai J."/>
            <person name="Kamiya A."/>
            <person name="Meyers C."/>
            <person name="Nakajima M."/>
            <person name="Narusaka M."/>
            <person name="Seki M."/>
            <person name="Sakurai T."/>
            <person name="Satou M."/>
            <person name="Tamse R."/>
            <person name="Vaysberg M."/>
            <person name="Wallender E.K."/>
            <person name="Wong C."/>
            <person name="Yamamura Y."/>
            <person name="Yuan S."/>
            <person name="Shinozaki K."/>
            <person name="Davis R.W."/>
            <person name="Theologis A."/>
            <person name="Ecker J.R."/>
        </authorList>
    </citation>
    <scope>NUCLEOTIDE SEQUENCE [LARGE SCALE MRNA]</scope>
    <source>
        <strain>cv. Columbia</strain>
    </source>
</reference>
<dbReference type="EC" id="1.14.19.-"/>
<dbReference type="EMBL" id="AC068143">
    <property type="protein sequence ID" value="AAF82163.1"/>
    <property type="status" value="ALT_SEQ"/>
    <property type="molecule type" value="Genomic_DNA"/>
</dbReference>
<dbReference type="EMBL" id="CP002684">
    <property type="protein sequence ID" value="AEE27977.1"/>
    <property type="molecule type" value="Genomic_DNA"/>
</dbReference>
<dbReference type="EMBL" id="BT005732">
    <property type="status" value="NOT_ANNOTATED_CDS"/>
    <property type="molecule type" value="mRNA"/>
</dbReference>
<dbReference type="PIR" id="C86199">
    <property type="entry name" value="C86199"/>
</dbReference>
<dbReference type="SMR" id="Q9LMI4"/>
<dbReference type="FunCoup" id="Q9LMI4">
    <property type="interactions" value="300"/>
</dbReference>
<dbReference type="STRING" id="3702.Q9LMI4"/>
<dbReference type="PaxDb" id="3702-AT1G06350.1"/>
<dbReference type="ProteomicsDB" id="243284"/>
<dbReference type="EnsemblPlants" id="AT1G06350.1">
    <property type="protein sequence ID" value="AT1G06350.1"/>
    <property type="gene ID" value="AT1G06350"/>
</dbReference>
<dbReference type="GeneID" id="837146"/>
<dbReference type="Gramene" id="AT1G06350.1">
    <property type="protein sequence ID" value="AT1G06350.1"/>
    <property type="gene ID" value="AT1G06350"/>
</dbReference>
<dbReference type="KEGG" id="ath:AT1G06350"/>
<dbReference type="Araport" id="AT1G06350"/>
<dbReference type="TAIR" id="AT1G06350">
    <property type="gene designation" value="ADS4"/>
</dbReference>
<dbReference type="eggNOG" id="KOG1600">
    <property type="taxonomic scope" value="Eukaryota"/>
</dbReference>
<dbReference type="HOGENOM" id="CLU_027359_1_0_1"/>
<dbReference type="InParanoid" id="Q9LMI4"/>
<dbReference type="OMA" id="HMLGNKP"/>
<dbReference type="OrthoDB" id="10260134at2759"/>
<dbReference type="PhylomeDB" id="Q9LMI4"/>
<dbReference type="BioCyc" id="ARA:AT1G06350-MONOMER"/>
<dbReference type="UniPathway" id="UPA00658"/>
<dbReference type="PRO" id="PR:Q9LMI4"/>
<dbReference type="Proteomes" id="UP000006548">
    <property type="component" value="Chromosome 1"/>
</dbReference>
<dbReference type="ExpressionAtlas" id="Q9LMI4">
    <property type="expression patterns" value="baseline and differential"/>
</dbReference>
<dbReference type="GO" id="GO:0005789">
    <property type="term" value="C:endoplasmic reticulum membrane"/>
    <property type="evidence" value="ECO:0007669"/>
    <property type="project" value="UniProtKB-SubCell"/>
</dbReference>
<dbReference type="GO" id="GO:0016717">
    <property type="term" value="F:oxidoreductase activity, acting on paired donors, with oxidation of a pair of donors resulting in the reduction of molecular oxygen to two molecules of water"/>
    <property type="evidence" value="ECO:0007669"/>
    <property type="project" value="InterPro"/>
</dbReference>
<dbReference type="GO" id="GO:0010114">
    <property type="term" value="P:response to red light"/>
    <property type="evidence" value="ECO:0000270"/>
    <property type="project" value="UniProtKB"/>
</dbReference>
<dbReference type="GO" id="GO:0006636">
    <property type="term" value="P:unsaturated fatty acid biosynthetic process"/>
    <property type="evidence" value="ECO:0007669"/>
    <property type="project" value="UniProtKB-UniPathway"/>
</dbReference>
<dbReference type="CDD" id="cd03505">
    <property type="entry name" value="Delta9-FADS-like"/>
    <property type="match status" value="1"/>
</dbReference>
<dbReference type="InterPro" id="IPR015876">
    <property type="entry name" value="Acyl-CoA_DS"/>
</dbReference>
<dbReference type="InterPro" id="IPR005804">
    <property type="entry name" value="FA_desaturase_dom"/>
</dbReference>
<dbReference type="PANTHER" id="PTHR11351">
    <property type="entry name" value="ACYL-COA DESATURASE"/>
    <property type="match status" value="1"/>
</dbReference>
<dbReference type="PANTHER" id="PTHR11351:SF66">
    <property type="entry name" value="DELTA-9 DESATURASE-LIKE 4 PROTEIN-RELATED"/>
    <property type="match status" value="1"/>
</dbReference>
<dbReference type="Pfam" id="PF00487">
    <property type="entry name" value="FA_desaturase"/>
    <property type="match status" value="1"/>
</dbReference>
<dbReference type="PRINTS" id="PR00075">
    <property type="entry name" value="FACDDSATRASE"/>
</dbReference>
<comment type="cofactor">
    <cofactor evidence="1">
        <name>Fe cation</name>
        <dbReference type="ChEBI" id="CHEBI:24875"/>
    </cofactor>
</comment>
<comment type="pathway">
    <text>Lipid metabolism; polyunsaturated fatty acid biosynthesis.</text>
</comment>
<comment type="subcellular location">
    <subcellularLocation>
        <location evidence="1">Endoplasmic reticulum membrane</location>
        <topology evidence="1">Multi-pass membrane protein</topology>
    </subcellularLocation>
</comment>
<comment type="domain">
    <text evidence="1">The histidine box domains may contain the active site and/or be involved in metal ion binding.</text>
</comment>
<comment type="similarity">
    <text evidence="3">Belongs to the fatty acid desaturase type 1 family.</text>
</comment>
<comment type="sequence caution" evidence="3">
    <conflict type="erroneous gene model prediction">
        <sequence resource="EMBL-CDS" id="AAF82163"/>
    </conflict>
</comment>
<comment type="sequence caution" evidence="3">
    <conflict type="frameshift">
        <sequence resource="EMBL" id="BT005732"/>
    </conflict>
</comment>
<feature type="chain" id="PRO_0000185430" description="Delta-9 desaturase-like 4 protein">
    <location>
        <begin position="1"/>
        <end position="300"/>
    </location>
</feature>
<feature type="transmembrane region" description="Helical" evidence="2">
    <location>
        <begin position="39"/>
        <end position="59"/>
    </location>
</feature>
<feature type="transmembrane region" description="Helical" evidence="2">
    <location>
        <begin position="61"/>
        <end position="81"/>
    </location>
</feature>
<feature type="transmembrane region" description="Helical" evidence="2">
    <location>
        <begin position="175"/>
        <end position="195"/>
    </location>
</feature>
<feature type="transmembrane region" description="Helical" evidence="2">
    <location>
        <begin position="200"/>
        <end position="220"/>
    </location>
</feature>
<feature type="short sequence motif" description="Histidine box-1">
    <location>
        <begin position="78"/>
        <end position="83"/>
    </location>
</feature>
<feature type="short sequence motif" description="Histidine box-2">
    <location>
        <begin position="115"/>
        <end position="119"/>
    </location>
</feature>
<feature type="short sequence motif" description="Histidine box-3">
    <location>
        <begin position="247"/>
        <end position="251"/>
    </location>
</feature>
<organism>
    <name type="scientific">Arabidopsis thaliana</name>
    <name type="common">Mouse-ear cress</name>
    <dbReference type="NCBI Taxonomy" id="3702"/>
    <lineage>
        <taxon>Eukaryota</taxon>
        <taxon>Viridiplantae</taxon>
        <taxon>Streptophyta</taxon>
        <taxon>Embryophyta</taxon>
        <taxon>Tracheophyta</taxon>
        <taxon>Spermatophyta</taxon>
        <taxon>Magnoliopsida</taxon>
        <taxon>eudicotyledons</taxon>
        <taxon>Gunneridae</taxon>
        <taxon>Pentapetalae</taxon>
        <taxon>rosids</taxon>
        <taxon>malvids</taxon>
        <taxon>Brassicales</taxon>
        <taxon>Brassicaceae</taxon>
        <taxon>Camelineae</taxon>
        <taxon>Arabidopsis</taxon>
    </lineage>
</organism>
<proteinExistence type="evidence at transcript level"/>
<sequence>MCDPTRDDGSSRSRVVSTMQKRAYFQRQWPLVDVVRASVVVIVHFLCLLAPFNFKWEALRFGLVLFALTTLSITFSFHRNLSHRSFKIPKWLEYPWAYSAVFALQGDPMDWVSIHRFHHQFTDSDRDPHSPKEGLLFSHILWIFDTQYIKYKCGGRDNVLDLKKQWFYKFLRRTIAVHILMFWTILYLYGGLPYLTCGGGVGIFIGYHVTWLVNSACHIWGSRSWNTKDTSRNVWWLSLFTMGESWHNNHHAFESSARQGLEWWQIDITWYLIRLFEVLGIATDVKLPSELQKQKMALVR</sequence>
<protein>
    <recommendedName>
        <fullName>Delta-9 desaturase-like 4 protein</fullName>
        <ecNumber>1.14.19.-</ecNumber>
    </recommendedName>
</protein>
<accession>Q9LMI4</accession>
<evidence type="ECO:0000250" key="1"/>
<evidence type="ECO:0000255" key="2"/>
<evidence type="ECO:0000305" key="3"/>
<gene>
    <name type="ordered locus">At1g06350</name>
    <name type="ORF">T2D23.5</name>
    <name type="ORF">T2D23_16</name>
</gene>
<keyword id="KW-0256">Endoplasmic reticulum</keyword>
<keyword id="KW-0275">Fatty acid biosynthesis</keyword>
<keyword id="KW-0276">Fatty acid metabolism</keyword>
<keyword id="KW-0408">Iron</keyword>
<keyword id="KW-0444">Lipid biosynthesis</keyword>
<keyword id="KW-0443">Lipid metabolism</keyword>
<keyword id="KW-0472">Membrane</keyword>
<keyword id="KW-0560">Oxidoreductase</keyword>
<keyword id="KW-1185">Reference proteome</keyword>
<keyword id="KW-0812">Transmembrane</keyword>
<keyword id="KW-1133">Transmembrane helix</keyword>